<reference key="1">
    <citation type="journal article" date="2004" name="J. Bacteriol.">
        <title>Complete genome sequence of the genetically tractable hydrogenotrophic methanogen Methanococcus maripaludis.</title>
        <authorList>
            <person name="Hendrickson E.L."/>
            <person name="Kaul R."/>
            <person name="Zhou Y."/>
            <person name="Bovee D."/>
            <person name="Chapman P."/>
            <person name="Chung J."/>
            <person name="Conway de Macario E."/>
            <person name="Dodsworth J.A."/>
            <person name="Gillett W."/>
            <person name="Graham D.E."/>
            <person name="Hackett M."/>
            <person name="Haydock A.K."/>
            <person name="Kang A."/>
            <person name="Land M.L."/>
            <person name="Levy R."/>
            <person name="Lie T.J."/>
            <person name="Major T.A."/>
            <person name="Moore B.C."/>
            <person name="Porat I."/>
            <person name="Palmeiri A."/>
            <person name="Rouse G."/>
            <person name="Saenphimmachak C."/>
            <person name="Soell D."/>
            <person name="Van Dien S."/>
            <person name="Wang T."/>
            <person name="Whitman W.B."/>
            <person name="Xia Q."/>
            <person name="Zhang Y."/>
            <person name="Larimer F.W."/>
            <person name="Olson M.V."/>
            <person name="Leigh J.A."/>
        </authorList>
    </citation>
    <scope>NUCLEOTIDE SEQUENCE [LARGE SCALE GENOMIC DNA]</scope>
    <source>
        <strain>DSM 14266 / JCM 13030 / NBRC 101832 / S2 / LL</strain>
    </source>
</reference>
<proteinExistence type="inferred from homology"/>
<comment type="similarity">
    <text evidence="1">Belongs to the eukaryotic ribosomal protein eL30 family.</text>
</comment>
<accession>Q6LXI6</accession>
<sequence>MDINRAIRVAVDTGNVVLGTKQAIKNIKHGEGQLVIVADNCAKDVREDIFYYTQLSETPVYTHQATSIELGAICGKPFPVSALLVLEPGNSAILNVNNEE</sequence>
<organism>
    <name type="scientific">Methanococcus maripaludis (strain DSM 14266 / JCM 13030 / NBRC 101832 / S2 / LL)</name>
    <dbReference type="NCBI Taxonomy" id="267377"/>
    <lineage>
        <taxon>Archaea</taxon>
        <taxon>Methanobacteriati</taxon>
        <taxon>Methanobacteriota</taxon>
        <taxon>Methanomada group</taxon>
        <taxon>Methanococci</taxon>
        <taxon>Methanococcales</taxon>
        <taxon>Methanococcaceae</taxon>
        <taxon>Methanococcus</taxon>
    </lineage>
</organism>
<protein>
    <recommendedName>
        <fullName evidence="1">Large ribosomal subunit protein eL30</fullName>
    </recommendedName>
    <alternativeName>
        <fullName evidence="2">50S ribosomal protein L30e</fullName>
    </alternativeName>
</protein>
<keyword id="KW-1185">Reference proteome</keyword>
<keyword id="KW-0687">Ribonucleoprotein</keyword>
<keyword id="KW-0689">Ribosomal protein</keyword>
<feature type="chain" id="PRO_0000146150" description="Large ribosomal subunit protein eL30">
    <location>
        <begin position="1"/>
        <end position="100"/>
    </location>
</feature>
<evidence type="ECO:0000255" key="1">
    <source>
        <dbReference type="HAMAP-Rule" id="MF_00481"/>
    </source>
</evidence>
<evidence type="ECO:0000305" key="2"/>
<name>RL30E_METMP</name>
<gene>
    <name evidence="1" type="primary">rpl30e</name>
    <name type="ordered locus">MMP1365</name>
</gene>
<dbReference type="EMBL" id="BX950229">
    <property type="protein sequence ID" value="CAF30921.1"/>
    <property type="molecule type" value="Genomic_DNA"/>
</dbReference>
<dbReference type="SMR" id="Q6LXI6"/>
<dbReference type="STRING" id="267377.MMP1365"/>
<dbReference type="EnsemblBacteria" id="CAF30921">
    <property type="protein sequence ID" value="CAF30921"/>
    <property type="gene ID" value="MMP1365"/>
</dbReference>
<dbReference type="KEGG" id="mmp:MMP1365"/>
<dbReference type="PATRIC" id="fig|267377.15.peg.1400"/>
<dbReference type="eggNOG" id="arCOG01752">
    <property type="taxonomic scope" value="Archaea"/>
</dbReference>
<dbReference type="HOGENOM" id="CLU_130502_1_0_2"/>
<dbReference type="Proteomes" id="UP000000590">
    <property type="component" value="Chromosome"/>
</dbReference>
<dbReference type="GO" id="GO:0022625">
    <property type="term" value="C:cytosolic large ribosomal subunit"/>
    <property type="evidence" value="ECO:0007669"/>
    <property type="project" value="InterPro"/>
</dbReference>
<dbReference type="GO" id="GO:0003723">
    <property type="term" value="F:RNA binding"/>
    <property type="evidence" value="ECO:0007669"/>
    <property type="project" value="InterPro"/>
</dbReference>
<dbReference type="GO" id="GO:0003735">
    <property type="term" value="F:structural constituent of ribosome"/>
    <property type="evidence" value="ECO:0007669"/>
    <property type="project" value="InterPro"/>
</dbReference>
<dbReference type="GO" id="GO:0006412">
    <property type="term" value="P:translation"/>
    <property type="evidence" value="ECO:0007669"/>
    <property type="project" value="UniProtKB-UniRule"/>
</dbReference>
<dbReference type="Gene3D" id="3.30.1330.30">
    <property type="match status" value="1"/>
</dbReference>
<dbReference type="HAMAP" id="MF_00481">
    <property type="entry name" value="Ribosomal_eL30"/>
    <property type="match status" value="1"/>
</dbReference>
<dbReference type="InterPro" id="IPR000231">
    <property type="entry name" value="Ribosomal_eL30"/>
</dbReference>
<dbReference type="InterPro" id="IPR039109">
    <property type="entry name" value="Ribosomal_eL30-like"/>
</dbReference>
<dbReference type="InterPro" id="IPR029064">
    <property type="entry name" value="Ribosomal_eL30-like_sf"/>
</dbReference>
<dbReference type="InterPro" id="IPR022991">
    <property type="entry name" value="Ribosomal_eL30_CS"/>
</dbReference>
<dbReference type="InterPro" id="IPR004038">
    <property type="entry name" value="Ribosomal_eL8/eL30/eS12/Gad45"/>
</dbReference>
<dbReference type="NCBIfam" id="NF002172">
    <property type="entry name" value="PRK01018.1"/>
    <property type="match status" value="1"/>
</dbReference>
<dbReference type="PANTHER" id="PTHR11449">
    <property type="entry name" value="RIBOSOMAL PROTEIN L30"/>
    <property type="match status" value="1"/>
</dbReference>
<dbReference type="Pfam" id="PF01248">
    <property type="entry name" value="Ribosomal_L7Ae"/>
    <property type="match status" value="1"/>
</dbReference>
<dbReference type="SUPFAM" id="SSF55315">
    <property type="entry name" value="L30e-like"/>
    <property type="match status" value="1"/>
</dbReference>
<dbReference type="PROSITE" id="PS00709">
    <property type="entry name" value="RIBOSOMAL_L30E_1"/>
    <property type="match status" value="1"/>
</dbReference>
<dbReference type="PROSITE" id="PS00993">
    <property type="entry name" value="RIBOSOMAL_L30E_2"/>
    <property type="match status" value="1"/>
</dbReference>